<proteinExistence type="inferred from homology"/>
<protein>
    <recommendedName>
        <fullName evidence="1">Glutamyl-tRNA(Gln) amidotransferase subunit E</fullName>
        <shortName evidence="1">Glu-ADT subunit E</shortName>
        <ecNumber evidence="1">6.3.5.-</ecNumber>
    </recommendedName>
</protein>
<organism>
    <name type="scientific">Natronomonas pharaonis (strain ATCC 35678 / DSM 2160 / CIP 103997 / JCM 8858 / NBRC 14720 / NCIMB 2260 / Gabara)</name>
    <name type="common">Halobacterium pharaonis</name>
    <dbReference type="NCBI Taxonomy" id="348780"/>
    <lineage>
        <taxon>Archaea</taxon>
        <taxon>Methanobacteriati</taxon>
        <taxon>Methanobacteriota</taxon>
        <taxon>Stenosarchaea group</taxon>
        <taxon>Halobacteria</taxon>
        <taxon>Halobacteriales</taxon>
        <taxon>Haloarculaceae</taxon>
        <taxon>Natronomonas</taxon>
    </lineage>
</organism>
<accession>Q3IPH3</accession>
<gene>
    <name evidence="1" type="primary">gatE</name>
    <name type="ordered locus">NP_3774A</name>
</gene>
<name>GATE_NATPD</name>
<keyword id="KW-0067">ATP-binding</keyword>
<keyword id="KW-0436">Ligase</keyword>
<keyword id="KW-0547">Nucleotide-binding</keyword>
<keyword id="KW-0648">Protein biosynthesis</keyword>
<keyword id="KW-1185">Reference proteome</keyword>
<feature type="chain" id="PRO_1000146944" description="Glutamyl-tRNA(Gln) amidotransferase subunit E">
    <location>
        <begin position="1"/>
        <end position="617"/>
    </location>
</feature>
<reference key="1">
    <citation type="journal article" date="2005" name="Genome Res.">
        <title>Living with two extremes: conclusions from the genome sequence of Natronomonas pharaonis.</title>
        <authorList>
            <person name="Falb M."/>
            <person name="Pfeiffer F."/>
            <person name="Palm P."/>
            <person name="Rodewald K."/>
            <person name="Hickmann V."/>
            <person name="Tittor J."/>
            <person name="Oesterhelt D."/>
        </authorList>
    </citation>
    <scope>NUCLEOTIDE SEQUENCE [LARGE SCALE GENOMIC DNA]</scope>
    <source>
        <strain>ATCC 35678 / DSM 2160 / CIP 103997 / JCM 8858 / NBRC 14720 / NCIMB 2260 / Gabara</strain>
    </source>
</reference>
<dbReference type="EC" id="6.3.5.-" evidence="1"/>
<dbReference type="EMBL" id="CR936257">
    <property type="protein sequence ID" value="CAI49978.1"/>
    <property type="molecule type" value="Genomic_DNA"/>
</dbReference>
<dbReference type="RefSeq" id="WP_011323595.1">
    <property type="nucleotide sequence ID" value="NC_007426.1"/>
</dbReference>
<dbReference type="SMR" id="Q3IPH3"/>
<dbReference type="STRING" id="348780.NP_3774A"/>
<dbReference type="EnsemblBacteria" id="CAI49978">
    <property type="protein sequence ID" value="CAI49978"/>
    <property type="gene ID" value="NP_3774A"/>
</dbReference>
<dbReference type="GeneID" id="3702739"/>
<dbReference type="KEGG" id="nph:NP_3774A"/>
<dbReference type="eggNOG" id="arCOG01719">
    <property type="taxonomic scope" value="Archaea"/>
</dbReference>
<dbReference type="HOGENOM" id="CLU_030702_0_0_2"/>
<dbReference type="OrthoDB" id="7316at2157"/>
<dbReference type="Proteomes" id="UP000002698">
    <property type="component" value="Chromosome"/>
</dbReference>
<dbReference type="GO" id="GO:0005737">
    <property type="term" value="C:cytoplasm"/>
    <property type="evidence" value="ECO:0007669"/>
    <property type="project" value="InterPro"/>
</dbReference>
<dbReference type="GO" id="GO:0004812">
    <property type="term" value="F:aminoacyl-tRNA ligase activity"/>
    <property type="evidence" value="ECO:0007669"/>
    <property type="project" value="InterPro"/>
</dbReference>
<dbReference type="GO" id="GO:0005524">
    <property type="term" value="F:ATP binding"/>
    <property type="evidence" value="ECO:0007669"/>
    <property type="project" value="UniProtKB-KW"/>
</dbReference>
<dbReference type="GO" id="GO:0050567">
    <property type="term" value="F:glutaminyl-tRNA synthase (glutamine-hydrolyzing) activity"/>
    <property type="evidence" value="ECO:0007669"/>
    <property type="project" value="UniProtKB-UniRule"/>
</dbReference>
<dbReference type="GO" id="GO:0070681">
    <property type="term" value="P:glutaminyl-tRNAGln biosynthesis via transamidation"/>
    <property type="evidence" value="ECO:0007669"/>
    <property type="project" value="TreeGrafter"/>
</dbReference>
<dbReference type="GO" id="GO:0006412">
    <property type="term" value="P:translation"/>
    <property type="evidence" value="ECO:0007669"/>
    <property type="project" value="UniProtKB-UniRule"/>
</dbReference>
<dbReference type="FunFam" id="1.10.10.410:FF:000003">
    <property type="entry name" value="Glutamyl-tRNA(Gln) amidotransferase subunit E"/>
    <property type="match status" value="1"/>
</dbReference>
<dbReference type="Gene3D" id="1.10.10.410">
    <property type="match status" value="1"/>
</dbReference>
<dbReference type="Gene3D" id="3.30.1360.30">
    <property type="entry name" value="GAD-like domain"/>
    <property type="match status" value="1"/>
</dbReference>
<dbReference type="Gene3D" id="1.10.150.380">
    <property type="entry name" value="GatB domain, N-terminal subdomain"/>
    <property type="match status" value="1"/>
</dbReference>
<dbReference type="HAMAP" id="MF_00588">
    <property type="entry name" value="GatE"/>
    <property type="match status" value="1"/>
</dbReference>
<dbReference type="InterPro" id="IPR017959">
    <property type="entry name" value="Asn/Gln-tRNA_amidoTrfase_suB/E"/>
</dbReference>
<dbReference type="InterPro" id="IPR006075">
    <property type="entry name" value="Asn/Gln-tRNA_Trfase_suB/E_cat"/>
</dbReference>
<dbReference type="InterPro" id="IPR018027">
    <property type="entry name" value="Asn/Gln_amidotransferase"/>
</dbReference>
<dbReference type="InterPro" id="IPR003789">
    <property type="entry name" value="Asn/Gln_tRNA_amidoTrase-B-like"/>
</dbReference>
<dbReference type="InterPro" id="IPR004115">
    <property type="entry name" value="GAD-like_sf"/>
</dbReference>
<dbReference type="InterPro" id="IPR029351">
    <property type="entry name" value="GAD_dom"/>
</dbReference>
<dbReference type="InterPro" id="IPR042114">
    <property type="entry name" value="GatB_C_1"/>
</dbReference>
<dbReference type="InterPro" id="IPR023168">
    <property type="entry name" value="GatB_Yqey_C_2"/>
</dbReference>
<dbReference type="InterPro" id="IPR004414">
    <property type="entry name" value="GatE"/>
</dbReference>
<dbReference type="InterPro" id="IPR017958">
    <property type="entry name" value="Gln-tRNA_amidoTrfase_suB_CS"/>
</dbReference>
<dbReference type="InterPro" id="IPR014746">
    <property type="entry name" value="Gln_synth/guanido_kin_cat_dom"/>
</dbReference>
<dbReference type="NCBIfam" id="TIGR00134">
    <property type="entry name" value="gatE_arch"/>
    <property type="match status" value="1"/>
</dbReference>
<dbReference type="NCBIfam" id="NF003107">
    <property type="entry name" value="PRK04028.1"/>
    <property type="match status" value="1"/>
</dbReference>
<dbReference type="PANTHER" id="PTHR11659">
    <property type="entry name" value="GLUTAMYL-TRNA GLN AMIDOTRANSFERASE SUBUNIT B MITOCHONDRIAL AND PROKARYOTIC PET112-RELATED"/>
    <property type="match status" value="1"/>
</dbReference>
<dbReference type="PANTHER" id="PTHR11659:SF2">
    <property type="entry name" value="GLUTAMYL-TRNA(GLN) AMIDOTRANSFERASE SUBUNIT E"/>
    <property type="match status" value="1"/>
</dbReference>
<dbReference type="Pfam" id="PF02938">
    <property type="entry name" value="GAD"/>
    <property type="match status" value="1"/>
</dbReference>
<dbReference type="Pfam" id="PF02934">
    <property type="entry name" value="GatB_N"/>
    <property type="match status" value="1"/>
</dbReference>
<dbReference type="Pfam" id="PF02637">
    <property type="entry name" value="GatB_Yqey"/>
    <property type="match status" value="1"/>
</dbReference>
<dbReference type="SMART" id="SM00845">
    <property type="entry name" value="GatB_Yqey"/>
    <property type="match status" value="1"/>
</dbReference>
<dbReference type="SUPFAM" id="SSF55261">
    <property type="entry name" value="GAD domain-like"/>
    <property type="match status" value="1"/>
</dbReference>
<dbReference type="SUPFAM" id="SSF89095">
    <property type="entry name" value="GatB/YqeY motif"/>
    <property type="match status" value="1"/>
</dbReference>
<dbReference type="SUPFAM" id="SSF55931">
    <property type="entry name" value="Glutamine synthetase/guanido kinase"/>
    <property type="match status" value="1"/>
</dbReference>
<dbReference type="PROSITE" id="PS01234">
    <property type="entry name" value="GATB"/>
    <property type="match status" value="1"/>
</dbReference>
<evidence type="ECO:0000255" key="1">
    <source>
        <dbReference type="HAMAP-Rule" id="MF_00588"/>
    </source>
</evidence>
<comment type="function">
    <text evidence="1">Allows the formation of correctly charged Gln-tRNA(Gln) through the transamidation of misacylated Glu-tRNA(Gln) in organisms which lack glutaminyl-tRNA synthetase. The reaction takes place in the presence of glutamine and ATP through an activated gamma-phospho-Glu-tRNA(Gln). The GatDE system is specific for glutamate and does not act on aspartate.</text>
</comment>
<comment type="catalytic activity">
    <reaction evidence="1">
        <text>L-glutamyl-tRNA(Gln) + L-glutamine + ATP + H2O = L-glutaminyl-tRNA(Gln) + L-glutamate + ADP + phosphate + H(+)</text>
        <dbReference type="Rhea" id="RHEA:17521"/>
        <dbReference type="Rhea" id="RHEA-COMP:9681"/>
        <dbReference type="Rhea" id="RHEA-COMP:9684"/>
        <dbReference type="ChEBI" id="CHEBI:15377"/>
        <dbReference type="ChEBI" id="CHEBI:15378"/>
        <dbReference type="ChEBI" id="CHEBI:29985"/>
        <dbReference type="ChEBI" id="CHEBI:30616"/>
        <dbReference type="ChEBI" id="CHEBI:43474"/>
        <dbReference type="ChEBI" id="CHEBI:58359"/>
        <dbReference type="ChEBI" id="CHEBI:78520"/>
        <dbReference type="ChEBI" id="CHEBI:78521"/>
        <dbReference type="ChEBI" id="CHEBI:456216"/>
    </reaction>
</comment>
<comment type="subunit">
    <text evidence="1">Heterodimer of GatD and GatE.</text>
</comment>
<comment type="similarity">
    <text evidence="1">Belongs to the GatB/GatE family. GatE subfamily.</text>
</comment>
<sequence length="617" mass="66964">MSYDYEDLGLVAGLEIHQQLDTETKLFCNCPTERREPEEAVRSFTRYLHPTKSELGELDEAALEESRVDREFEYLAFDTTCLVEEDDEPPHRLDEEALATAMEIATLLDCSVVDQAQVMRKIVVDGSNTSGFQRSTLLATDGEIETDEGAVRIADMLLEEESAARIEEHDDGVTYGLDRLGIPLVEIGTKPDIRTPTQAREAAERIGMLLRSTGKVKRGLGTIRQDVNVSIEEGARVEMKGVQSLDDIDDLVENEVGRQIELLDIAETLRERDAAVGEPRDVTEVFEDTESGVIAGAERVEAVRLDGFDGLVGREIQPDRRLGTELSDHAKRHGAGGIFHTDELPAYGVSEAEVEALRDAVGADAADAVALVAADTDVAETAIEAVADRAETAIEGVPEETRGANEDGTSRYLRPLPGAARMYPETDVPPVEPDPSDIDPPELLTERVDRYQSDLGLDAGLAEQVAYGRYMPVFETAVDRGVDPTTAAGTLASTLTELRRDDVAVENLTDEHLLSVLELVEAGDLPQEGINPALETLADDPSLTAEAAVEEAGLGGVDRETVREAVVEVIERNADQVEAEGMGAFSGLMGECMGQLRGKADGEVVSELLREEIQKRA</sequence>